<name>PURK_MYCTO</name>
<protein>
    <recommendedName>
        <fullName evidence="1">N5-carboxyaminoimidazole ribonucleotide synthase</fullName>
        <shortName evidence="1">N5-CAIR synthase</shortName>
        <ecNumber evidence="1">6.3.4.18</ecNumber>
    </recommendedName>
    <alternativeName>
        <fullName evidence="1">5-(carboxyamino)imidazole ribonucleotide synthetase</fullName>
    </alternativeName>
</protein>
<feature type="chain" id="PRO_0000428162" description="N5-carboxyaminoimidazole ribonucleotide synthase">
    <location>
        <begin position="1"/>
        <end position="429"/>
    </location>
</feature>
<feature type="domain" description="ATP-grasp" evidence="1">
    <location>
        <begin position="121"/>
        <end position="310"/>
    </location>
</feature>
<feature type="region of interest" description="Disordered" evidence="2">
    <location>
        <begin position="406"/>
        <end position="429"/>
    </location>
</feature>
<feature type="binding site" evidence="1">
    <location>
        <position position="117"/>
    </location>
    <ligand>
        <name>ATP</name>
        <dbReference type="ChEBI" id="CHEBI:30616"/>
    </ligand>
</feature>
<feature type="binding site" evidence="1">
    <location>
        <position position="157"/>
    </location>
    <ligand>
        <name>ATP</name>
        <dbReference type="ChEBI" id="CHEBI:30616"/>
    </ligand>
</feature>
<feature type="binding site" evidence="1">
    <location>
        <begin position="194"/>
        <end position="197"/>
    </location>
    <ligand>
        <name>ATP</name>
        <dbReference type="ChEBI" id="CHEBI:30616"/>
    </ligand>
</feature>
<feature type="binding site" evidence="1">
    <location>
        <position position="202"/>
    </location>
    <ligand>
        <name>ATP</name>
        <dbReference type="ChEBI" id="CHEBI:30616"/>
    </ligand>
</feature>
<feature type="binding site" evidence="1">
    <location>
        <begin position="280"/>
        <end position="281"/>
    </location>
    <ligand>
        <name>ATP</name>
        <dbReference type="ChEBI" id="CHEBI:30616"/>
    </ligand>
</feature>
<proteinExistence type="inferred from homology"/>
<keyword id="KW-0067">ATP-binding</keyword>
<keyword id="KW-0436">Ligase</keyword>
<keyword id="KW-0547">Nucleotide-binding</keyword>
<keyword id="KW-0658">Purine biosynthesis</keyword>
<keyword id="KW-1185">Reference proteome</keyword>
<dbReference type="EC" id="6.3.4.18" evidence="1"/>
<dbReference type="EMBL" id="AE000516">
    <property type="protein sequence ID" value="AAK47717.1"/>
    <property type="molecule type" value="Genomic_DNA"/>
</dbReference>
<dbReference type="PIR" id="E70979">
    <property type="entry name" value="E70979"/>
</dbReference>
<dbReference type="RefSeq" id="WP_003417126.1">
    <property type="nucleotide sequence ID" value="NZ_KK341227.1"/>
</dbReference>
<dbReference type="SMR" id="P9WHL8"/>
<dbReference type="KEGG" id="mtc:MT3376"/>
<dbReference type="PATRIC" id="fig|83331.31.peg.3633"/>
<dbReference type="HOGENOM" id="CLU_011534_0_2_11"/>
<dbReference type="UniPathway" id="UPA00074">
    <property type="reaction ID" value="UER00942"/>
</dbReference>
<dbReference type="Proteomes" id="UP000001020">
    <property type="component" value="Chromosome"/>
</dbReference>
<dbReference type="GO" id="GO:0005829">
    <property type="term" value="C:cytosol"/>
    <property type="evidence" value="ECO:0007669"/>
    <property type="project" value="TreeGrafter"/>
</dbReference>
<dbReference type="GO" id="GO:0034028">
    <property type="term" value="F:5-(carboxyamino)imidazole ribonucleotide synthase activity"/>
    <property type="evidence" value="ECO:0007669"/>
    <property type="project" value="UniProtKB-UniRule"/>
</dbReference>
<dbReference type="GO" id="GO:0005524">
    <property type="term" value="F:ATP binding"/>
    <property type="evidence" value="ECO:0007669"/>
    <property type="project" value="UniProtKB-KW"/>
</dbReference>
<dbReference type="GO" id="GO:0046872">
    <property type="term" value="F:metal ion binding"/>
    <property type="evidence" value="ECO:0007669"/>
    <property type="project" value="InterPro"/>
</dbReference>
<dbReference type="GO" id="GO:0004638">
    <property type="term" value="F:phosphoribosylaminoimidazole carboxylase activity"/>
    <property type="evidence" value="ECO:0007669"/>
    <property type="project" value="InterPro"/>
</dbReference>
<dbReference type="GO" id="GO:0006189">
    <property type="term" value="P:'de novo' IMP biosynthetic process"/>
    <property type="evidence" value="ECO:0007669"/>
    <property type="project" value="UniProtKB-UniRule"/>
</dbReference>
<dbReference type="FunFam" id="3.30.1490.20:FF:000015">
    <property type="entry name" value="N5-carboxyaminoimidazole ribonucleotide synthase"/>
    <property type="match status" value="1"/>
</dbReference>
<dbReference type="FunFam" id="3.30.470.20:FF:000029">
    <property type="entry name" value="N5-carboxyaminoimidazole ribonucleotide synthase"/>
    <property type="match status" value="1"/>
</dbReference>
<dbReference type="FunFam" id="3.40.50.20:FF:000025">
    <property type="entry name" value="N5-carboxyaminoimidazole ribonucleotide synthase"/>
    <property type="match status" value="1"/>
</dbReference>
<dbReference type="Gene3D" id="3.40.50.20">
    <property type="match status" value="1"/>
</dbReference>
<dbReference type="Gene3D" id="3.30.1490.20">
    <property type="entry name" value="ATP-grasp fold, A domain"/>
    <property type="match status" value="1"/>
</dbReference>
<dbReference type="Gene3D" id="3.30.470.20">
    <property type="entry name" value="ATP-grasp fold, B domain"/>
    <property type="match status" value="1"/>
</dbReference>
<dbReference type="HAMAP" id="MF_01928">
    <property type="entry name" value="PurK"/>
    <property type="match status" value="1"/>
</dbReference>
<dbReference type="InterPro" id="IPR011761">
    <property type="entry name" value="ATP-grasp"/>
</dbReference>
<dbReference type="InterPro" id="IPR003135">
    <property type="entry name" value="ATP-grasp_carboxylate-amine"/>
</dbReference>
<dbReference type="InterPro" id="IPR013815">
    <property type="entry name" value="ATP_grasp_subdomain_1"/>
</dbReference>
<dbReference type="InterPro" id="IPR016185">
    <property type="entry name" value="PreATP-grasp_dom_sf"/>
</dbReference>
<dbReference type="InterPro" id="IPR005875">
    <property type="entry name" value="PurK"/>
</dbReference>
<dbReference type="InterPro" id="IPR040686">
    <property type="entry name" value="PurK_C"/>
</dbReference>
<dbReference type="InterPro" id="IPR054350">
    <property type="entry name" value="PurT/PurK_preATP-grasp"/>
</dbReference>
<dbReference type="InterPro" id="IPR011054">
    <property type="entry name" value="Rudment_hybrid_motif"/>
</dbReference>
<dbReference type="NCBIfam" id="NF004679">
    <property type="entry name" value="PRK06019.1-5"/>
    <property type="match status" value="1"/>
</dbReference>
<dbReference type="NCBIfam" id="NF004680">
    <property type="entry name" value="PRK06019.1-6"/>
    <property type="match status" value="1"/>
</dbReference>
<dbReference type="NCBIfam" id="TIGR01161">
    <property type="entry name" value="purK"/>
    <property type="match status" value="1"/>
</dbReference>
<dbReference type="PANTHER" id="PTHR11609:SF5">
    <property type="entry name" value="PHOSPHORIBOSYLAMINOIMIDAZOLE CARBOXYLASE"/>
    <property type="match status" value="1"/>
</dbReference>
<dbReference type="PANTHER" id="PTHR11609">
    <property type="entry name" value="PURINE BIOSYNTHESIS PROTEIN 6/7, PUR6/7"/>
    <property type="match status" value="1"/>
</dbReference>
<dbReference type="Pfam" id="PF02222">
    <property type="entry name" value="ATP-grasp"/>
    <property type="match status" value="1"/>
</dbReference>
<dbReference type="Pfam" id="PF17769">
    <property type="entry name" value="PurK_C"/>
    <property type="match status" value="1"/>
</dbReference>
<dbReference type="Pfam" id="PF22660">
    <property type="entry name" value="RS_preATP-grasp-like"/>
    <property type="match status" value="1"/>
</dbReference>
<dbReference type="SMART" id="SM01209">
    <property type="entry name" value="GARS_A"/>
    <property type="match status" value="1"/>
</dbReference>
<dbReference type="SUPFAM" id="SSF56059">
    <property type="entry name" value="Glutathione synthetase ATP-binding domain-like"/>
    <property type="match status" value="1"/>
</dbReference>
<dbReference type="SUPFAM" id="SSF52440">
    <property type="entry name" value="PreATP-grasp domain"/>
    <property type="match status" value="1"/>
</dbReference>
<dbReference type="SUPFAM" id="SSF51246">
    <property type="entry name" value="Rudiment single hybrid motif"/>
    <property type="match status" value="1"/>
</dbReference>
<dbReference type="PROSITE" id="PS50975">
    <property type="entry name" value="ATP_GRASP"/>
    <property type="match status" value="1"/>
</dbReference>
<comment type="function">
    <text evidence="1">Catalyzes the ATP-dependent conversion of 5-aminoimidazole ribonucleotide (AIR) and HCO(3)(-) to N5-carboxyaminoimidazole ribonucleotide (N5-CAIR).</text>
</comment>
<comment type="catalytic activity">
    <reaction evidence="1">
        <text>5-amino-1-(5-phospho-beta-D-ribosyl)imidazole + hydrogencarbonate + ATP = 5-carboxyamino-1-(5-phospho-D-ribosyl)imidazole + ADP + phosphate + 2 H(+)</text>
        <dbReference type="Rhea" id="RHEA:19317"/>
        <dbReference type="ChEBI" id="CHEBI:15378"/>
        <dbReference type="ChEBI" id="CHEBI:17544"/>
        <dbReference type="ChEBI" id="CHEBI:30616"/>
        <dbReference type="ChEBI" id="CHEBI:43474"/>
        <dbReference type="ChEBI" id="CHEBI:58730"/>
        <dbReference type="ChEBI" id="CHEBI:137981"/>
        <dbReference type="ChEBI" id="CHEBI:456216"/>
        <dbReference type="EC" id="6.3.4.18"/>
    </reaction>
</comment>
<comment type="pathway">
    <text evidence="1">Purine metabolism; IMP biosynthesis via de novo pathway; 5-amino-1-(5-phospho-D-ribosyl)imidazole-4-carboxylate from 5-amino-1-(5-phospho-D-ribosyl)imidazole (N5-CAIR route): step 1/2.</text>
</comment>
<comment type="subunit">
    <text evidence="1">Homodimer.</text>
</comment>
<comment type="similarity">
    <text evidence="1">Belongs to the PurK/PurT family.</text>
</comment>
<accession>P9WHL8</accession>
<accession>L0TEV0</accession>
<accession>P65898</accession>
<accession>P96881</accession>
<gene>
    <name evidence="1" type="primary">purK</name>
    <name type="ordered locus">MT3376</name>
</gene>
<sequence length="429" mass="45695">MMAVASSRTPAVTSFIAPLVAMVGGGQLARMTHQAAIALGQNLRVLVTSADDPAAQVTPNVVIGSHTDLAALRRVAAGADVLTFDHEHVPNELLEKLVADGVNVAPSPQALVHAQDKLVMRQRLAAAGVAVPRYAGIKDPDEIDVFAARVDAPIVVKAVRGGYDGRGVRMARDVADARDFARECLADGVAVLVEERVDLRRELSALVARSPFGQGAAWPVVQTVQRDGTCVLVIAPAPALPDDLATAAQRLALQLADELGVVGVLAVELFETTDGALLVNELAMRPHNSGHWTIDGARTSQFEQHLRAVLDYPLGDSDAVVPVTVMANVLGAAQPPAMSVDERLHHLFARMPDARVHLYGKAERPGRKVGHINFLGSDVAQLCERAELAAHWLSHGRWTDGWDPHRASDDAVGVPPACGGRSDEEERRL</sequence>
<evidence type="ECO:0000255" key="1">
    <source>
        <dbReference type="HAMAP-Rule" id="MF_01928"/>
    </source>
</evidence>
<evidence type="ECO:0000256" key="2">
    <source>
        <dbReference type="SAM" id="MobiDB-lite"/>
    </source>
</evidence>
<reference key="1">
    <citation type="journal article" date="2002" name="J. Bacteriol.">
        <title>Whole-genome comparison of Mycobacterium tuberculosis clinical and laboratory strains.</title>
        <authorList>
            <person name="Fleischmann R.D."/>
            <person name="Alland D."/>
            <person name="Eisen J.A."/>
            <person name="Carpenter L."/>
            <person name="White O."/>
            <person name="Peterson J.D."/>
            <person name="DeBoy R.T."/>
            <person name="Dodson R.J."/>
            <person name="Gwinn M.L."/>
            <person name="Haft D.H."/>
            <person name="Hickey E.K."/>
            <person name="Kolonay J.F."/>
            <person name="Nelson W.C."/>
            <person name="Umayam L.A."/>
            <person name="Ermolaeva M.D."/>
            <person name="Salzberg S.L."/>
            <person name="Delcher A."/>
            <person name="Utterback T.R."/>
            <person name="Weidman J.F."/>
            <person name="Khouri H.M."/>
            <person name="Gill J."/>
            <person name="Mikula A."/>
            <person name="Bishai W."/>
            <person name="Jacobs W.R. Jr."/>
            <person name="Venter J.C."/>
            <person name="Fraser C.M."/>
        </authorList>
    </citation>
    <scope>NUCLEOTIDE SEQUENCE [LARGE SCALE GENOMIC DNA]</scope>
    <source>
        <strain>CDC 1551 / Oshkosh</strain>
    </source>
</reference>
<organism>
    <name type="scientific">Mycobacterium tuberculosis (strain CDC 1551 / Oshkosh)</name>
    <dbReference type="NCBI Taxonomy" id="83331"/>
    <lineage>
        <taxon>Bacteria</taxon>
        <taxon>Bacillati</taxon>
        <taxon>Actinomycetota</taxon>
        <taxon>Actinomycetes</taxon>
        <taxon>Mycobacteriales</taxon>
        <taxon>Mycobacteriaceae</taxon>
        <taxon>Mycobacterium</taxon>
        <taxon>Mycobacterium tuberculosis complex</taxon>
    </lineage>
</organism>